<organism>
    <name type="scientific">Geobacillus sp. (strain WCH70)</name>
    <dbReference type="NCBI Taxonomy" id="471223"/>
    <lineage>
        <taxon>Bacteria</taxon>
        <taxon>Bacillati</taxon>
        <taxon>Bacillota</taxon>
        <taxon>Bacilli</taxon>
        <taxon>Bacillales</taxon>
        <taxon>Anoxybacillaceae</taxon>
        <taxon>Geobacillus</taxon>
    </lineage>
</organism>
<accession>C5D7A6</accession>
<reference key="1">
    <citation type="submission" date="2009-06" db="EMBL/GenBank/DDBJ databases">
        <title>Complete sequence of chromosome of Geopacillus sp. WCH70.</title>
        <authorList>
            <consortium name="US DOE Joint Genome Institute"/>
            <person name="Lucas S."/>
            <person name="Copeland A."/>
            <person name="Lapidus A."/>
            <person name="Glavina del Rio T."/>
            <person name="Dalin E."/>
            <person name="Tice H."/>
            <person name="Bruce D."/>
            <person name="Goodwin L."/>
            <person name="Pitluck S."/>
            <person name="Chertkov O."/>
            <person name="Brettin T."/>
            <person name="Detter J.C."/>
            <person name="Han C."/>
            <person name="Larimer F."/>
            <person name="Land M."/>
            <person name="Hauser L."/>
            <person name="Kyrpides N."/>
            <person name="Mikhailova N."/>
            <person name="Brumm P."/>
            <person name="Mead D.A."/>
            <person name="Richardson P."/>
        </authorList>
    </citation>
    <scope>NUCLEOTIDE SEQUENCE [LARGE SCALE GENOMIC DNA]</scope>
    <source>
        <strain>WCH70</strain>
    </source>
</reference>
<protein>
    <recommendedName>
        <fullName evidence="1">Bis(5'-nucleosyl)-tetraphosphatase PrpE [asymmetrical]</fullName>
        <ecNumber evidence="1">3.6.1.17</ecNumber>
    </recommendedName>
    <alternativeName>
        <fullName evidence="1">Ap4A hydrolase</fullName>
    </alternativeName>
    <alternativeName>
        <fullName evidence="1">Diadenosine 5',5'''-P1,P4-tetraphosphate asymmetrical hydrolase</fullName>
        <shortName evidence="1">Diadenosine tetraphosphatase</shortName>
    </alternativeName>
</protein>
<evidence type="ECO:0000255" key="1">
    <source>
        <dbReference type="HAMAP-Rule" id="MF_01443"/>
    </source>
</evidence>
<gene>
    <name evidence="1" type="primary">prpE</name>
    <name type="ordered locus">GWCH70_0778</name>
</gene>
<keyword id="KW-0342">GTP-binding</keyword>
<keyword id="KW-0378">Hydrolase</keyword>
<keyword id="KW-0533">Nickel</keyword>
<keyword id="KW-0547">Nucleotide-binding</keyword>
<sequence length="245" mass="27938">MKIDIIGDIHGCYSEFVKLTKKLGYEWDSGIPLHPDGRKLGFVGDLTDRGPQSLQTVEVVYSLVERESAYYVPGNHCNKLYRFFLGRNVQITHGLETTVEEYRALPPSEQAMIRKKFMRLYEAAPLYAQLDNGRLIIAHAGLRRDYIGRNDKKVQTFVLYGDITGETNPDGTPVRRDWAKRYKGSAWIVYGHTPVKQPRIINRTINIDTGCVFGGALTAFRYPEIETISVPSSLPYVPEKFRTFD</sequence>
<name>PRPE_GEOSW</name>
<comment type="function">
    <text evidence="1">Asymmetrically hydrolyzes Ap4p to yield AMP and ATP.</text>
</comment>
<comment type="catalytic activity">
    <reaction evidence="1">
        <text>P(1),P(4)-bis(5'-guanosyl) tetraphosphate + H2O = GMP + GTP + 2 H(+)</text>
        <dbReference type="Rhea" id="RHEA:22484"/>
        <dbReference type="ChEBI" id="CHEBI:15377"/>
        <dbReference type="ChEBI" id="CHEBI:15378"/>
        <dbReference type="ChEBI" id="CHEBI:37565"/>
        <dbReference type="ChEBI" id="CHEBI:57553"/>
        <dbReference type="ChEBI" id="CHEBI:58115"/>
        <dbReference type="EC" id="3.6.1.17"/>
    </reaction>
</comment>
<comment type="cofactor">
    <cofactor evidence="1">
        <name>Ni(2+)</name>
        <dbReference type="ChEBI" id="CHEBI:49786"/>
    </cofactor>
</comment>
<comment type="similarity">
    <text evidence="1">Belongs to the PrpE family.</text>
</comment>
<proteinExistence type="inferred from homology"/>
<dbReference type="EC" id="3.6.1.17" evidence="1"/>
<dbReference type="EMBL" id="CP001638">
    <property type="protein sequence ID" value="ACS23664.1"/>
    <property type="molecule type" value="Genomic_DNA"/>
</dbReference>
<dbReference type="SMR" id="C5D7A6"/>
<dbReference type="STRING" id="471223.GWCH70_0778"/>
<dbReference type="KEGG" id="gwc:GWCH70_0778"/>
<dbReference type="eggNOG" id="COG0639">
    <property type="taxonomic scope" value="Bacteria"/>
</dbReference>
<dbReference type="HOGENOM" id="CLU_023125_3_0_9"/>
<dbReference type="OrthoDB" id="9807890at2"/>
<dbReference type="GO" id="GO:0005737">
    <property type="term" value="C:cytoplasm"/>
    <property type="evidence" value="ECO:0007669"/>
    <property type="project" value="TreeGrafter"/>
</dbReference>
<dbReference type="GO" id="GO:0004081">
    <property type="term" value="F:bis(5'-nucleosyl)-tetraphosphatase (asymmetrical) activity"/>
    <property type="evidence" value="ECO:0007669"/>
    <property type="project" value="UniProtKB-UniRule"/>
</dbReference>
<dbReference type="GO" id="GO:0005525">
    <property type="term" value="F:GTP binding"/>
    <property type="evidence" value="ECO:0007669"/>
    <property type="project" value="UniProtKB-KW"/>
</dbReference>
<dbReference type="GO" id="GO:0016151">
    <property type="term" value="F:nickel cation binding"/>
    <property type="evidence" value="ECO:0007669"/>
    <property type="project" value="UniProtKB-UniRule"/>
</dbReference>
<dbReference type="GO" id="GO:0016791">
    <property type="term" value="F:phosphatase activity"/>
    <property type="evidence" value="ECO:0007669"/>
    <property type="project" value="TreeGrafter"/>
</dbReference>
<dbReference type="CDD" id="cd07423">
    <property type="entry name" value="MPP_Prp_like"/>
    <property type="match status" value="1"/>
</dbReference>
<dbReference type="Gene3D" id="3.60.21.10">
    <property type="match status" value="1"/>
</dbReference>
<dbReference type="HAMAP" id="MF_01443">
    <property type="entry name" value="PrpE"/>
    <property type="match status" value="1"/>
</dbReference>
<dbReference type="InterPro" id="IPR050126">
    <property type="entry name" value="Ap4A_hydrolase"/>
</dbReference>
<dbReference type="InterPro" id="IPR023937">
    <property type="entry name" value="Bis(5'-nucleosyl)-tetraP_PrpE"/>
</dbReference>
<dbReference type="InterPro" id="IPR004843">
    <property type="entry name" value="Calcineurin-like_PHP_ApaH"/>
</dbReference>
<dbReference type="InterPro" id="IPR029052">
    <property type="entry name" value="Metallo-depent_PP-like"/>
</dbReference>
<dbReference type="InterPro" id="IPR041780">
    <property type="entry name" value="MPP_PrpE-like"/>
</dbReference>
<dbReference type="InterPro" id="IPR006186">
    <property type="entry name" value="Ser/Thr-sp_prot-phosphatase"/>
</dbReference>
<dbReference type="NCBIfam" id="NF010148">
    <property type="entry name" value="PRK13625.1"/>
    <property type="match status" value="1"/>
</dbReference>
<dbReference type="PANTHER" id="PTHR42850:SF7">
    <property type="entry name" value="BIS(5'-NUCLEOSYL)-TETRAPHOSPHATASE PRPE [ASYMMETRICAL]"/>
    <property type="match status" value="1"/>
</dbReference>
<dbReference type="PANTHER" id="PTHR42850">
    <property type="entry name" value="METALLOPHOSPHOESTERASE"/>
    <property type="match status" value="1"/>
</dbReference>
<dbReference type="Pfam" id="PF00149">
    <property type="entry name" value="Metallophos"/>
    <property type="match status" value="1"/>
</dbReference>
<dbReference type="PRINTS" id="PR00114">
    <property type="entry name" value="STPHPHTASE"/>
</dbReference>
<dbReference type="SUPFAM" id="SSF56300">
    <property type="entry name" value="Metallo-dependent phosphatases"/>
    <property type="match status" value="1"/>
</dbReference>
<feature type="chain" id="PRO_1000215291" description="Bis(5'-nucleosyl)-tetraphosphatase PrpE [asymmetrical]">
    <location>
        <begin position="1"/>
        <end position="245"/>
    </location>
</feature>